<protein>
    <recommendedName>
        <fullName evidence="1">RNA-binding protein Hfq</fullName>
    </recommendedName>
</protein>
<evidence type="ECO:0000255" key="1">
    <source>
        <dbReference type="HAMAP-Rule" id="MF_00436"/>
    </source>
</evidence>
<evidence type="ECO:0000255" key="2">
    <source>
        <dbReference type="PROSITE-ProRule" id="PRU01346"/>
    </source>
</evidence>
<name>HFQ_DECAR</name>
<organism>
    <name type="scientific">Dechloromonas aromatica (strain RCB)</name>
    <dbReference type="NCBI Taxonomy" id="159087"/>
    <lineage>
        <taxon>Bacteria</taxon>
        <taxon>Pseudomonadati</taxon>
        <taxon>Pseudomonadota</taxon>
        <taxon>Betaproteobacteria</taxon>
        <taxon>Rhodocyclales</taxon>
        <taxon>Azonexaceae</taxon>
        <taxon>Dechloromonas</taxon>
    </lineage>
</organism>
<comment type="function">
    <text evidence="1">RNA chaperone that binds small regulatory RNA (sRNAs) and mRNAs to facilitate mRNA translational regulation in response to envelope stress, environmental stress and changes in metabolite concentrations. Also binds with high specificity to tRNAs.</text>
</comment>
<comment type="subunit">
    <text evidence="1">Homohexamer.</text>
</comment>
<comment type="similarity">
    <text evidence="1">Belongs to the Hfq family.</text>
</comment>
<dbReference type="EMBL" id="CP000089">
    <property type="protein sequence ID" value="AAZ47710.1"/>
    <property type="molecule type" value="Genomic_DNA"/>
</dbReference>
<dbReference type="SMR" id="Q47BS1"/>
<dbReference type="STRING" id="159087.Daro_2980"/>
<dbReference type="KEGG" id="dar:Daro_2980"/>
<dbReference type="eggNOG" id="COG1923">
    <property type="taxonomic scope" value="Bacteria"/>
</dbReference>
<dbReference type="HOGENOM" id="CLU_113688_2_2_4"/>
<dbReference type="OrthoDB" id="9799751at2"/>
<dbReference type="GO" id="GO:0005829">
    <property type="term" value="C:cytosol"/>
    <property type="evidence" value="ECO:0007669"/>
    <property type="project" value="TreeGrafter"/>
</dbReference>
<dbReference type="GO" id="GO:0003723">
    <property type="term" value="F:RNA binding"/>
    <property type="evidence" value="ECO:0007669"/>
    <property type="project" value="UniProtKB-UniRule"/>
</dbReference>
<dbReference type="GO" id="GO:0006355">
    <property type="term" value="P:regulation of DNA-templated transcription"/>
    <property type="evidence" value="ECO:0007669"/>
    <property type="project" value="InterPro"/>
</dbReference>
<dbReference type="GO" id="GO:0043487">
    <property type="term" value="P:regulation of RNA stability"/>
    <property type="evidence" value="ECO:0007669"/>
    <property type="project" value="TreeGrafter"/>
</dbReference>
<dbReference type="GO" id="GO:0045974">
    <property type="term" value="P:regulation of translation, ncRNA-mediated"/>
    <property type="evidence" value="ECO:0007669"/>
    <property type="project" value="TreeGrafter"/>
</dbReference>
<dbReference type="CDD" id="cd01716">
    <property type="entry name" value="Hfq"/>
    <property type="match status" value="1"/>
</dbReference>
<dbReference type="FunFam" id="2.30.30.100:FF:000001">
    <property type="entry name" value="RNA-binding protein Hfq"/>
    <property type="match status" value="1"/>
</dbReference>
<dbReference type="Gene3D" id="2.30.30.100">
    <property type="match status" value="1"/>
</dbReference>
<dbReference type="HAMAP" id="MF_00436">
    <property type="entry name" value="Hfq"/>
    <property type="match status" value="1"/>
</dbReference>
<dbReference type="InterPro" id="IPR005001">
    <property type="entry name" value="Hfq"/>
</dbReference>
<dbReference type="InterPro" id="IPR010920">
    <property type="entry name" value="LSM_dom_sf"/>
</dbReference>
<dbReference type="InterPro" id="IPR047575">
    <property type="entry name" value="Sm"/>
</dbReference>
<dbReference type="NCBIfam" id="TIGR02383">
    <property type="entry name" value="Hfq"/>
    <property type="match status" value="1"/>
</dbReference>
<dbReference type="NCBIfam" id="NF001602">
    <property type="entry name" value="PRK00395.1"/>
    <property type="match status" value="1"/>
</dbReference>
<dbReference type="PANTHER" id="PTHR34772">
    <property type="entry name" value="RNA-BINDING PROTEIN HFQ"/>
    <property type="match status" value="1"/>
</dbReference>
<dbReference type="PANTHER" id="PTHR34772:SF1">
    <property type="entry name" value="RNA-BINDING PROTEIN HFQ"/>
    <property type="match status" value="1"/>
</dbReference>
<dbReference type="Pfam" id="PF17209">
    <property type="entry name" value="Hfq"/>
    <property type="match status" value="1"/>
</dbReference>
<dbReference type="SUPFAM" id="SSF50182">
    <property type="entry name" value="Sm-like ribonucleoproteins"/>
    <property type="match status" value="1"/>
</dbReference>
<dbReference type="PROSITE" id="PS52002">
    <property type="entry name" value="SM"/>
    <property type="match status" value="1"/>
</dbReference>
<reference key="1">
    <citation type="journal article" date="2009" name="BMC Genomics">
        <title>Metabolic analysis of the soil microbe Dechloromonas aromatica str. RCB: indications of a surprisingly complex life-style and cryptic anaerobic pathways for aromatic degradation.</title>
        <authorList>
            <person name="Salinero K.K."/>
            <person name="Keller K."/>
            <person name="Feil W.S."/>
            <person name="Feil H."/>
            <person name="Trong S."/>
            <person name="Di Bartolo G."/>
            <person name="Lapidus A."/>
        </authorList>
    </citation>
    <scope>NUCLEOTIDE SEQUENCE [LARGE SCALE GENOMIC DNA]</scope>
    <source>
        <strain>RCB</strain>
    </source>
</reference>
<keyword id="KW-0694">RNA-binding</keyword>
<keyword id="KW-0346">Stress response</keyword>
<gene>
    <name evidence="1" type="primary">hfq</name>
    <name type="ordered locus">Daro_2980</name>
</gene>
<sequence>MSNKGQLLQDPFLNALRREHVPVSIYLVNGIKLQGQVESFDQYVVLLKNTVTQMVYKHAISTVVPARPVNLQQEQAAE</sequence>
<feature type="chain" id="PRO_0000265152" description="RNA-binding protein Hfq">
    <location>
        <begin position="1"/>
        <end position="78"/>
    </location>
</feature>
<feature type="domain" description="Sm" evidence="2">
    <location>
        <begin position="10"/>
        <end position="69"/>
    </location>
</feature>
<proteinExistence type="inferred from homology"/>
<accession>Q47BS1</accession>